<feature type="chain" id="PRO_1000136982" description="5'-deoxynucleotidase YPK_1557">
    <location>
        <begin position="1"/>
        <end position="197"/>
    </location>
</feature>
<feature type="domain" description="HD" evidence="2">
    <location>
        <begin position="28"/>
        <end position="140"/>
    </location>
</feature>
<feature type="binding site" evidence="1">
    <location>
        <begin position="16"/>
        <end position="17"/>
    </location>
    <ligand>
        <name>substrate</name>
    </ligand>
</feature>
<feature type="binding site" evidence="1">
    <location>
        <position position="31"/>
    </location>
    <ligand>
        <name>a divalent metal cation</name>
        <dbReference type="ChEBI" id="CHEBI:60240"/>
    </ligand>
</feature>
<feature type="binding site" evidence="1">
    <location>
        <position position="31"/>
    </location>
    <ligand>
        <name>substrate</name>
    </ligand>
</feature>
<feature type="binding site" evidence="1">
    <location>
        <position position="66"/>
    </location>
    <ligand>
        <name>a divalent metal cation</name>
        <dbReference type="ChEBI" id="CHEBI:60240"/>
    </ligand>
</feature>
<feature type="binding site" evidence="1">
    <location>
        <position position="67"/>
    </location>
    <ligand>
        <name>a divalent metal cation</name>
        <dbReference type="ChEBI" id="CHEBI:60240"/>
    </ligand>
</feature>
<feature type="binding site" evidence="1">
    <location>
        <position position="67"/>
    </location>
    <ligand>
        <name>substrate</name>
    </ligand>
</feature>
<feature type="binding site" evidence="1">
    <location>
        <begin position="75"/>
        <end position="78"/>
    </location>
    <ligand>
        <name>substrate</name>
    </ligand>
</feature>
<feature type="binding site" evidence="1">
    <location>
        <position position="135"/>
    </location>
    <ligand>
        <name>a divalent metal cation</name>
        <dbReference type="ChEBI" id="CHEBI:60240"/>
    </ligand>
</feature>
<feature type="binding site" evidence="1">
    <location>
        <position position="135"/>
    </location>
    <ligand>
        <name>substrate</name>
    </ligand>
</feature>
<feature type="site" description="Appears to be important in orienting the phosphate for catalysis" evidence="1">
    <location>
        <position position="16"/>
    </location>
</feature>
<evidence type="ECO:0000255" key="1">
    <source>
        <dbReference type="HAMAP-Rule" id="MF_01100"/>
    </source>
</evidence>
<evidence type="ECO:0000255" key="2">
    <source>
        <dbReference type="PROSITE-ProRule" id="PRU01175"/>
    </source>
</evidence>
<accession>B1JGL0</accession>
<sequence length="197" mass="22729">MSHFFAHLSRLKLINRWPLMRNVRTENVSEHSLQVAFVAHALAIIKNRKFNGNLNAERIALLAMYHDASEVITGDLPTPIKYHNPKIAHEYKKIEKVAQQKLIEMLPKELQHDFRCLLDEHYYSEEEKALVKQADALCAYLKCLEELSAGNNEFIQAKARLEKTLAIRQSPEMDYFMAVFVPSFSLSLDEISLDSLD</sequence>
<reference key="1">
    <citation type="submission" date="2008-02" db="EMBL/GenBank/DDBJ databases">
        <title>Complete sequence of Yersinia pseudotuberculosis YPIII.</title>
        <authorList>
            <consortium name="US DOE Joint Genome Institute"/>
            <person name="Copeland A."/>
            <person name="Lucas S."/>
            <person name="Lapidus A."/>
            <person name="Glavina del Rio T."/>
            <person name="Dalin E."/>
            <person name="Tice H."/>
            <person name="Bruce D."/>
            <person name="Goodwin L."/>
            <person name="Pitluck S."/>
            <person name="Munk A.C."/>
            <person name="Brettin T."/>
            <person name="Detter J.C."/>
            <person name="Han C."/>
            <person name="Tapia R."/>
            <person name="Schmutz J."/>
            <person name="Larimer F."/>
            <person name="Land M."/>
            <person name="Hauser L."/>
            <person name="Challacombe J.F."/>
            <person name="Green L."/>
            <person name="Lindler L.E."/>
            <person name="Nikolich M.P."/>
            <person name="Richardson P."/>
        </authorList>
    </citation>
    <scope>NUCLEOTIDE SEQUENCE [LARGE SCALE GENOMIC DNA]</scope>
    <source>
        <strain>YPIII</strain>
    </source>
</reference>
<comment type="function">
    <text evidence="1">Catalyzes the strictly specific dephosphorylation of 2'-deoxyribonucleoside 5'-monophosphates.</text>
</comment>
<comment type="catalytic activity">
    <reaction evidence="1">
        <text>a 2'-deoxyribonucleoside 5'-phosphate + H2O = a 2'-deoxyribonucleoside + phosphate</text>
        <dbReference type="Rhea" id="RHEA:36167"/>
        <dbReference type="ChEBI" id="CHEBI:15377"/>
        <dbReference type="ChEBI" id="CHEBI:18274"/>
        <dbReference type="ChEBI" id="CHEBI:43474"/>
        <dbReference type="ChEBI" id="CHEBI:65317"/>
        <dbReference type="EC" id="3.1.3.89"/>
    </reaction>
</comment>
<comment type="cofactor">
    <cofactor evidence="1">
        <name>a divalent metal cation</name>
        <dbReference type="ChEBI" id="CHEBI:60240"/>
    </cofactor>
</comment>
<comment type="subunit">
    <text evidence="1">Homodimer.</text>
</comment>
<comment type="subcellular location">
    <subcellularLocation>
        <location evidence="1">Cytoplasm</location>
    </subcellularLocation>
</comment>
<comment type="similarity">
    <text evidence="1">Belongs to the 5DNU family.</text>
</comment>
<proteinExistence type="inferred from homology"/>
<organism>
    <name type="scientific">Yersinia pseudotuberculosis serotype O:3 (strain YPIII)</name>
    <dbReference type="NCBI Taxonomy" id="502800"/>
    <lineage>
        <taxon>Bacteria</taxon>
        <taxon>Pseudomonadati</taxon>
        <taxon>Pseudomonadota</taxon>
        <taxon>Gammaproteobacteria</taxon>
        <taxon>Enterobacterales</taxon>
        <taxon>Yersiniaceae</taxon>
        <taxon>Yersinia</taxon>
    </lineage>
</organism>
<dbReference type="EC" id="3.1.3.89" evidence="1"/>
<dbReference type="EMBL" id="CP000950">
    <property type="protein sequence ID" value="ACA67850.1"/>
    <property type="molecule type" value="Genomic_DNA"/>
</dbReference>
<dbReference type="SMR" id="B1JGL0"/>
<dbReference type="KEGG" id="ypy:YPK_1557"/>
<dbReference type="PATRIC" id="fig|502800.11.peg.2199"/>
<dbReference type="GO" id="GO:0005737">
    <property type="term" value="C:cytoplasm"/>
    <property type="evidence" value="ECO:0007669"/>
    <property type="project" value="UniProtKB-SubCell"/>
</dbReference>
<dbReference type="GO" id="GO:0002953">
    <property type="term" value="F:5'-deoxynucleotidase activity"/>
    <property type="evidence" value="ECO:0007669"/>
    <property type="project" value="UniProtKB-EC"/>
</dbReference>
<dbReference type="GO" id="GO:0046872">
    <property type="term" value="F:metal ion binding"/>
    <property type="evidence" value="ECO:0007669"/>
    <property type="project" value="UniProtKB-KW"/>
</dbReference>
<dbReference type="GO" id="GO:0000166">
    <property type="term" value="F:nucleotide binding"/>
    <property type="evidence" value="ECO:0007669"/>
    <property type="project" value="UniProtKB-KW"/>
</dbReference>
<dbReference type="FunFam" id="1.10.3210.10:FF:000002">
    <property type="entry name" value="Nucleotidase YfbR"/>
    <property type="match status" value="1"/>
</dbReference>
<dbReference type="Gene3D" id="1.10.3210.10">
    <property type="entry name" value="Hypothetical protein af1432"/>
    <property type="match status" value="1"/>
</dbReference>
<dbReference type="HAMAP" id="MF_01100">
    <property type="entry name" value="5DNU"/>
    <property type="match status" value="1"/>
</dbReference>
<dbReference type="InterPro" id="IPR003607">
    <property type="entry name" value="HD/PDEase_dom"/>
</dbReference>
<dbReference type="InterPro" id="IPR006674">
    <property type="entry name" value="HD_domain"/>
</dbReference>
<dbReference type="InterPro" id="IPR022971">
    <property type="entry name" value="YfbR"/>
</dbReference>
<dbReference type="InterPro" id="IPR039356">
    <property type="entry name" value="YfbR/HDDC2"/>
</dbReference>
<dbReference type="NCBIfam" id="NF003009">
    <property type="entry name" value="PRK03826.1"/>
    <property type="match status" value="1"/>
</dbReference>
<dbReference type="PANTHER" id="PTHR11845">
    <property type="entry name" value="5'-DEOXYNUCLEOTIDASE HDDC2"/>
    <property type="match status" value="1"/>
</dbReference>
<dbReference type="PANTHER" id="PTHR11845:SF13">
    <property type="entry name" value="5'-DEOXYNUCLEOTIDASE HDDC2"/>
    <property type="match status" value="1"/>
</dbReference>
<dbReference type="Pfam" id="PF12917">
    <property type="entry name" value="YfbR-like"/>
    <property type="match status" value="1"/>
</dbReference>
<dbReference type="SMART" id="SM00471">
    <property type="entry name" value="HDc"/>
    <property type="match status" value="1"/>
</dbReference>
<dbReference type="SUPFAM" id="SSF109604">
    <property type="entry name" value="HD-domain/PDEase-like"/>
    <property type="match status" value="1"/>
</dbReference>
<dbReference type="PROSITE" id="PS51831">
    <property type="entry name" value="HD"/>
    <property type="match status" value="1"/>
</dbReference>
<name>5DNU_YERPY</name>
<gene>
    <name type="ordered locus">YPK_1557</name>
</gene>
<protein>
    <recommendedName>
        <fullName evidence="1">5'-deoxynucleotidase YPK_1557</fullName>
        <ecNumber evidence="1">3.1.3.89</ecNumber>
    </recommendedName>
    <alternativeName>
        <fullName evidence="1">5'-deoxyribonucleotidase</fullName>
    </alternativeName>
    <alternativeName>
        <fullName evidence="1">Nucleoside 5'-monophosphate phosphohydrolase</fullName>
    </alternativeName>
</protein>
<keyword id="KW-0963">Cytoplasm</keyword>
<keyword id="KW-0378">Hydrolase</keyword>
<keyword id="KW-0479">Metal-binding</keyword>
<keyword id="KW-0547">Nucleotide-binding</keyword>